<sequence length="268" mass="28950">MRAGELKSLRVAVLGMSLAVGATAAGPARAFDPGAGVTKESGPFALFKFGFSAYKSGRKDEAVEAYRYAAEKGHTGSRWALANMYAYGDGVAENDLEAFKIYSEIAQQGVEPGSEDTGYFVNALISLAGYYRRGIPDTPVRSDLSQARQLYFQAASTFGVAEAQFQLARMLLSGEGGSVNVQQAKKWLNRARKNGHAGAMGVFGNVIFQEGQTARGLAYMTAALGQCSPKDRPWLQAMQEQAFSLATEDDRRVAITMSQNMHLQNDDD</sequence>
<reference key="1">
    <citation type="journal article" date="1991" name="J. Bacteriol.">
        <title>The exoR gene of Rhizobium meliloti affects RNA levels of other exo genes but lacks homology to known transcriptional regulators.</title>
        <authorList>
            <person name="Reed J.W."/>
            <person name="Glazebrook J."/>
            <person name="Walker G.C."/>
        </authorList>
    </citation>
    <scope>NUCLEOTIDE SEQUENCE [GENOMIC DNA]</scope>
    <source>
        <strain>1021</strain>
    </source>
</reference>
<reference key="2">
    <citation type="journal article" date="2001" name="Proc. Natl. Acad. Sci. U.S.A.">
        <title>Analysis of the chromosome sequence of the legume symbiont Sinorhizobium meliloti strain 1021.</title>
        <authorList>
            <person name="Capela D."/>
            <person name="Barloy-Hubler F."/>
            <person name="Gouzy J."/>
            <person name="Bothe G."/>
            <person name="Ampe F."/>
            <person name="Batut J."/>
            <person name="Boistard P."/>
            <person name="Becker A."/>
            <person name="Boutry M."/>
            <person name="Cadieu E."/>
            <person name="Dreano S."/>
            <person name="Gloux S."/>
            <person name="Godrie T."/>
            <person name="Goffeau A."/>
            <person name="Kahn D."/>
            <person name="Kiss E."/>
            <person name="Lelaure V."/>
            <person name="Masuy D."/>
            <person name="Pohl T."/>
            <person name="Portetelle D."/>
            <person name="Puehler A."/>
            <person name="Purnelle B."/>
            <person name="Ramsperger U."/>
            <person name="Renard C."/>
            <person name="Thebault P."/>
            <person name="Vandenbol M."/>
            <person name="Weidner S."/>
            <person name="Galibert F."/>
        </authorList>
    </citation>
    <scope>NUCLEOTIDE SEQUENCE [LARGE SCALE GENOMIC DNA]</scope>
    <source>
        <strain>1021</strain>
    </source>
</reference>
<reference key="3">
    <citation type="journal article" date="2001" name="Science">
        <title>The composite genome of the legume symbiont Sinorhizobium meliloti.</title>
        <authorList>
            <person name="Galibert F."/>
            <person name="Finan T.M."/>
            <person name="Long S.R."/>
            <person name="Puehler A."/>
            <person name="Abola P."/>
            <person name="Ampe F."/>
            <person name="Barloy-Hubler F."/>
            <person name="Barnett M.J."/>
            <person name="Becker A."/>
            <person name="Boistard P."/>
            <person name="Bothe G."/>
            <person name="Boutry M."/>
            <person name="Bowser L."/>
            <person name="Buhrmester J."/>
            <person name="Cadieu E."/>
            <person name="Capela D."/>
            <person name="Chain P."/>
            <person name="Cowie A."/>
            <person name="Davis R.W."/>
            <person name="Dreano S."/>
            <person name="Federspiel N.A."/>
            <person name="Fisher R.F."/>
            <person name="Gloux S."/>
            <person name="Godrie T."/>
            <person name="Goffeau A."/>
            <person name="Golding B."/>
            <person name="Gouzy J."/>
            <person name="Gurjal M."/>
            <person name="Hernandez-Lucas I."/>
            <person name="Hong A."/>
            <person name="Huizar L."/>
            <person name="Hyman R.W."/>
            <person name="Jones T."/>
            <person name="Kahn D."/>
            <person name="Kahn M.L."/>
            <person name="Kalman S."/>
            <person name="Keating D.H."/>
            <person name="Kiss E."/>
            <person name="Komp C."/>
            <person name="Lelaure V."/>
            <person name="Masuy D."/>
            <person name="Palm C."/>
            <person name="Peck M.C."/>
            <person name="Pohl T.M."/>
            <person name="Portetelle D."/>
            <person name="Purnelle B."/>
            <person name="Ramsperger U."/>
            <person name="Surzycki R."/>
            <person name="Thebault P."/>
            <person name="Vandenbol M."/>
            <person name="Vorhoelter F.J."/>
            <person name="Weidner S."/>
            <person name="Wells D.H."/>
            <person name="Wong K."/>
            <person name="Yeh K.-C."/>
            <person name="Batut J."/>
        </authorList>
    </citation>
    <scope>NUCLEOTIDE SEQUENCE [LARGE SCALE GENOMIC DNA]</scope>
    <source>
        <strain>1021</strain>
    </source>
</reference>
<evidence type="ECO:0000255" key="1"/>
<protein>
    <recommendedName>
        <fullName>Exopolysaccharide production negative regulator</fullName>
    </recommendedName>
</protein>
<accession>Q52926</accession>
<proteinExistence type="inferred from homology"/>
<keyword id="KW-0270">Exopolysaccharide synthesis</keyword>
<keyword id="KW-1185">Reference proteome</keyword>
<keyword id="KW-0732">Signal</keyword>
<comment type="function">
    <text>Negatively modulates exopolysaccharide (EPS) biosynthesis.</text>
</comment>
<feature type="signal peptide" evidence="1">
    <location>
        <begin position="1"/>
        <end position="22"/>
    </location>
</feature>
<feature type="chain" id="PRO_0000021218" description="Exopolysaccharide production negative regulator">
    <location>
        <begin position="23"/>
        <end position="268"/>
    </location>
</feature>
<organism>
    <name type="scientific">Rhizobium meliloti (strain 1021)</name>
    <name type="common">Ensifer meliloti</name>
    <name type="synonym">Sinorhizobium meliloti</name>
    <dbReference type="NCBI Taxonomy" id="266834"/>
    <lineage>
        <taxon>Bacteria</taxon>
        <taxon>Pseudomonadati</taxon>
        <taxon>Pseudomonadota</taxon>
        <taxon>Alphaproteobacteria</taxon>
        <taxon>Hyphomicrobiales</taxon>
        <taxon>Rhizobiaceae</taxon>
        <taxon>Sinorhizobium/Ensifer group</taxon>
        <taxon>Sinorhizobium</taxon>
    </lineage>
</organism>
<name>EXOR_RHIME</name>
<gene>
    <name type="primary">exoR</name>
    <name type="ordered locus">R01518</name>
    <name type="ORF">SMc02078</name>
</gene>
<dbReference type="EMBL" id="M61752">
    <property type="protein sequence ID" value="AAA26260.1"/>
    <property type="molecule type" value="Genomic_DNA"/>
</dbReference>
<dbReference type="EMBL" id="AL591688">
    <property type="protein sequence ID" value="CAC46097.1"/>
    <property type="molecule type" value="Genomic_DNA"/>
</dbReference>
<dbReference type="PIR" id="A39438">
    <property type="entry name" value="A39438"/>
</dbReference>
<dbReference type="RefSeq" id="NP_385624.1">
    <property type="nucleotide sequence ID" value="NC_003047.1"/>
</dbReference>
<dbReference type="RefSeq" id="WP_003534542.1">
    <property type="nucleotide sequence ID" value="NC_003047.1"/>
</dbReference>
<dbReference type="SMR" id="Q52926"/>
<dbReference type="EnsemblBacteria" id="CAC46097">
    <property type="protein sequence ID" value="CAC46097"/>
    <property type="gene ID" value="SMc02078"/>
</dbReference>
<dbReference type="KEGG" id="sme:SMc02078"/>
<dbReference type="PATRIC" id="fig|266834.11.peg.2940"/>
<dbReference type="eggNOG" id="COG0790">
    <property type="taxonomic scope" value="Bacteria"/>
</dbReference>
<dbReference type="HOGENOM" id="CLU_067747_1_0_5"/>
<dbReference type="OrthoDB" id="9796900at2"/>
<dbReference type="Proteomes" id="UP000001976">
    <property type="component" value="Chromosome"/>
</dbReference>
<dbReference type="GO" id="GO:0000271">
    <property type="term" value="P:polysaccharide biosynthetic process"/>
    <property type="evidence" value="ECO:0007669"/>
    <property type="project" value="UniProtKB-KW"/>
</dbReference>
<dbReference type="Gene3D" id="1.25.40.10">
    <property type="entry name" value="Tetratricopeptide repeat domain"/>
    <property type="match status" value="1"/>
</dbReference>
<dbReference type="InterPro" id="IPR053479">
    <property type="entry name" value="EPS_Regulator"/>
</dbReference>
<dbReference type="InterPro" id="IPR006597">
    <property type="entry name" value="Sel1-like"/>
</dbReference>
<dbReference type="InterPro" id="IPR050767">
    <property type="entry name" value="Sel1_AlgK"/>
</dbReference>
<dbReference type="InterPro" id="IPR011990">
    <property type="entry name" value="TPR-like_helical_dom_sf"/>
</dbReference>
<dbReference type="NCBIfam" id="NF045484">
    <property type="entry name" value="TransRegExoR"/>
    <property type="match status" value="1"/>
</dbReference>
<dbReference type="PANTHER" id="PTHR11102:SF160">
    <property type="entry name" value="ERAD-ASSOCIATED E3 UBIQUITIN-PROTEIN LIGASE COMPONENT HRD3"/>
    <property type="match status" value="1"/>
</dbReference>
<dbReference type="PANTHER" id="PTHR11102">
    <property type="entry name" value="SEL-1-LIKE PROTEIN"/>
    <property type="match status" value="1"/>
</dbReference>
<dbReference type="Pfam" id="PF08238">
    <property type="entry name" value="Sel1"/>
    <property type="match status" value="3"/>
</dbReference>
<dbReference type="SMART" id="SM00671">
    <property type="entry name" value="SEL1"/>
    <property type="match status" value="4"/>
</dbReference>
<dbReference type="SUPFAM" id="SSF81901">
    <property type="entry name" value="HCP-like"/>
    <property type="match status" value="1"/>
</dbReference>